<reference key="1">
    <citation type="journal article" date="1993" name="Biochemistry">
        <title>Identification of a second rat pancreatitis-associated protein. Messenger RNA cloning, gene structure, and expression during acute pancreatitis.</title>
        <authorList>
            <person name="Frigerio J.-M."/>
            <person name="Dusetti N.J."/>
            <person name="Keim V."/>
            <person name="Dagorn J.-C."/>
            <person name="Iovanna J.L."/>
        </authorList>
    </citation>
    <scope>NUCLEOTIDE SEQUENCE [GENOMIC DNA / MRNA]</scope>
    <source>
        <tissue>Pancreas</tissue>
    </source>
</reference>
<reference key="2">
    <citation type="journal article" date="1994" name="Gene">
        <title>Structure and expression of a novel rat RegIII gene.</title>
        <authorList>
            <person name="Suzuki Y."/>
            <person name="Yonekura H."/>
            <person name="Watanabe T."/>
            <person name="Unno M."/>
            <person name="Moriizumi S."/>
            <person name="Miyashita H."/>
            <person name="Okamoto H."/>
        </authorList>
    </citation>
    <scope>NUCLEOTIDE SEQUENCE [GENOMIC DNA / MRNA]</scope>
    <source>
        <strain>Wistar</strain>
    </source>
</reference>
<protein>
    <recommendedName>
        <fullName>Regenerating islet-derived protein 3-alpha</fullName>
        <shortName>REG-3-alpha</shortName>
    </recommendedName>
    <alternativeName>
        <fullName>Islet of Langerhans regenerating protein 3</fullName>
        <shortName>REG 3</shortName>
    </alternativeName>
    <alternativeName>
        <fullName>Lithostathine 3</fullName>
    </alternativeName>
    <alternativeName>
        <fullName>Pancreatitis-associated protein 2</fullName>
    </alternativeName>
    <alternativeName>
        <fullName>RegIII</fullName>
    </alternativeName>
    <alternativeName>
        <fullName>Regenerating islet-derived protein III-alpha</fullName>
        <shortName>Reg III-alpha</shortName>
    </alternativeName>
    <component>
        <recommendedName>
            <fullName>Regenerating islet-derived protein 3-alpha 16.5 kDa form</fullName>
        </recommendedName>
    </component>
    <component>
        <recommendedName>
            <fullName>Regenerating islet-derived protein 3-alpha 15 kDa form</fullName>
        </recommendedName>
    </component>
</protein>
<feature type="signal peptide" evidence="1">
    <location>
        <begin position="1"/>
        <end position="25"/>
    </location>
</feature>
<feature type="chain" id="PRO_0000017431" description="Regenerating islet-derived protein 3-alpha 16.5 kDa form">
    <location>
        <begin position="26"/>
        <end position="174"/>
    </location>
</feature>
<feature type="propeptide" id="PRO_0000422745" evidence="1">
    <location>
        <begin position="26"/>
        <end position="36"/>
    </location>
</feature>
<feature type="chain" id="PRO_0000422746" description="Regenerating islet-derived protein 3-alpha 15 kDa form">
    <location>
        <begin position="37"/>
        <end position="174"/>
    </location>
</feature>
<feature type="domain" description="C-type lectin" evidence="4">
    <location>
        <begin position="46"/>
        <end position="171"/>
    </location>
</feature>
<feature type="region of interest" description="Sufficient to activate EXTL3" evidence="3">
    <location>
        <begin position="102"/>
        <end position="117"/>
    </location>
</feature>
<feature type="binding site" evidence="3">
    <location>
        <position position="106"/>
    </location>
    <ligand>
        <name>Zn(2+)</name>
        <dbReference type="ChEBI" id="CHEBI:29105"/>
    </ligand>
</feature>
<feature type="binding site" evidence="3">
    <location>
        <position position="120"/>
    </location>
    <ligand>
        <name>Zn(2+)</name>
        <dbReference type="ChEBI" id="CHEBI:29105"/>
    </ligand>
</feature>
<feature type="disulfide bond" evidence="4">
    <location>
        <begin position="39"/>
        <end position="50"/>
    </location>
</feature>
<feature type="disulfide bond" evidence="4">
    <location>
        <begin position="67"/>
        <end position="170"/>
    </location>
</feature>
<feature type="disulfide bond" evidence="4">
    <location>
        <begin position="145"/>
        <end position="162"/>
    </location>
</feature>
<feature type="sequence conflict" description="In Ref. 2; BAA05071/BAA04904." evidence="5" ref="2">
    <original>W</original>
    <variation>G</variation>
    <location>
        <position position="104"/>
    </location>
</feature>
<keyword id="KW-0011">Acute phase</keyword>
<keyword id="KW-0929">Antimicrobial</keyword>
<keyword id="KW-1015">Disulfide bond</keyword>
<keyword id="KW-0395">Inflammatory response</keyword>
<keyword id="KW-0430">Lectin</keyword>
<keyword id="KW-0479">Metal-binding</keyword>
<keyword id="KW-1185">Reference proteome</keyword>
<keyword id="KW-0964">Secreted</keyword>
<keyword id="KW-0732">Signal</keyword>
<keyword id="KW-0862">Zinc</keyword>
<accession>P35231</accession>
<name>REG3A_RAT</name>
<evidence type="ECO:0000250" key="1"/>
<evidence type="ECO:0000250" key="2">
    <source>
        <dbReference type="UniProtKB" id="O09037"/>
    </source>
</evidence>
<evidence type="ECO:0000250" key="3">
    <source>
        <dbReference type="UniProtKB" id="Q06141"/>
    </source>
</evidence>
<evidence type="ECO:0000255" key="4">
    <source>
        <dbReference type="PROSITE-ProRule" id="PRU00040"/>
    </source>
</evidence>
<evidence type="ECO:0000305" key="5"/>
<organism>
    <name type="scientific">Rattus norvegicus</name>
    <name type="common">Rat</name>
    <dbReference type="NCBI Taxonomy" id="10116"/>
    <lineage>
        <taxon>Eukaryota</taxon>
        <taxon>Metazoa</taxon>
        <taxon>Chordata</taxon>
        <taxon>Craniata</taxon>
        <taxon>Vertebrata</taxon>
        <taxon>Euteleostomi</taxon>
        <taxon>Mammalia</taxon>
        <taxon>Eutheria</taxon>
        <taxon>Euarchontoglires</taxon>
        <taxon>Glires</taxon>
        <taxon>Rodentia</taxon>
        <taxon>Myomorpha</taxon>
        <taxon>Muroidea</taxon>
        <taxon>Muridae</taxon>
        <taxon>Murinae</taxon>
        <taxon>Rattus</taxon>
    </lineage>
</organism>
<proteinExistence type="evidence at transcript level"/>
<dbReference type="EMBL" id="L10230">
    <property type="protein sequence ID" value="AAA41808.1"/>
    <property type="molecule type" value="Genomic_DNA"/>
</dbReference>
<dbReference type="EMBL" id="L10229">
    <property type="protein sequence ID" value="AAA02980.1"/>
    <property type="molecule type" value="mRNA"/>
</dbReference>
<dbReference type="EMBL" id="D26078">
    <property type="protein sequence ID" value="BAA05071.1"/>
    <property type="molecule type" value="Genomic_DNA"/>
</dbReference>
<dbReference type="EMBL" id="D23676">
    <property type="protein sequence ID" value="BAA04904.1"/>
    <property type="molecule type" value="mRNA"/>
</dbReference>
<dbReference type="PIR" id="A48689">
    <property type="entry name" value="A48689"/>
</dbReference>
<dbReference type="PIR" id="I60296">
    <property type="entry name" value="I83377"/>
</dbReference>
<dbReference type="RefSeq" id="NP_001139318.1">
    <property type="nucleotide sequence ID" value="NM_001145846.2"/>
</dbReference>
<dbReference type="RefSeq" id="NP_742074.2">
    <property type="nucleotide sequence ID" value="NM_172077.2"/>
</dbReference>
<dbReference type="SMR" id="P35231"/>
<dbReference type="FunCoup" id="P35231">
    <property type="interactions" value="3"/>
</dbReference>
<dbReference type="STRING" id="10116.ENSRNOP00000008468"/>
<dbReference type="PaxDb" id="10116-ENSRNOP00000008468"/>
<dbReference type="GeneID" id="171162"/>
<dbReference type="KEGG" id="rno:171162"/>
<dbReference type="UCSC" id="RGD:621401">
    <property type="organism name" value="rat"/>
</dbReference>
<dbReference type="AGR" id="RGD:621401"/>
<dbReference type="CTD" id="5068"/>
<dbReference type="RGD" id="621401">
    <property type="gene designation" value="Reg3a"/>
</dbReference>
<dbReference type="eggNOG" id="KOG4297">
    <property type="taxonomic scope" value="Eukaryota"/>
</dbReference>
<dbReference type="InParanoid" id="P35231"/>
<dbReference type="OrthoDB" id="418245at2759"/>
<dbReference type="PhylomeDB" id="P35231"/>
<dbReference type="Reactome" id="R-RNO-6803157">
    <property type="pathway name" value="Antimicrobial peptides"/>
</dbReference>
<dbReference type="PRO" id="PR:P35231"/>
<dbReference type="Proteomes" id="UP000002494">
    <property type="component" value="Unplaced"/>
</dbReference>
<dbReference type="GO" id="GO:0005615">
    <property type="term" value="C:extracellular space"/>
    <property type="evidence" value="ECO:0000318"/>
    <property type="project" value="GO_Central"/>
</dbReference>
<dbReference type="GO" id="GO:0046872">
    <property type="term" value="F:metal ion binding"/>
    <property type="evidence" value="ECO:0007669"/>
    <property type="project" value="UniProtKB-KW"/>
</dbReference>
<dbReference type="GO" id="GO:0070492">
    <property type="term" value="F:oligosaccharide binding"/>
    <property type="evidence" value="ECO:0000318"/>
    <property type="project" value="GO_Central"/>
</dbReference>
<dbReference type="GO" id="GO:0042834">
    <property type="term" value="F:peptidoglycan binding"/>
    <property type="evidence" value="ECO:0000318"/>
    <property type="project" value="GO_Central"/>
</dbReference>
<dbReference type="GO" id="GO:0038023">
    <property type="term" value="F:signaling receptor activity"/>
    <property type="evidence" value="ECO:0000318"/>
    <property type="project" value="GO_Central"/>
</dbReference>
<dbReference type="GO" id="GO:0006953">
    <property type="term" value="P:acute-phase response"/>
    <property type="evidence" value="ECO:0007669"/>
    <property type="project" value="UniProtKB-KW"/>
</dbReference>
<dbReference type="GO" id="GO:0061844">
    <property type="term" value="P:antimicrobial humoral immune response mediated by antimicrobial peptide"/>
    <property type="evidence" value="ECO:0000318"/>
    <property type="project" value="GO_Central"/>
</dbReference>
<dbReference type="GO" id="GO:0045617">
    <property type="term" value="P:negative regulation of keratinocyte differentiation"/>
    <property type="evidence" value="ECO:0000250"/>
    <property type="project" value="UniProtKB"/>
</dbReference>
<dbReference type="GO" id="GO:0008284">
    <property type="term" value="P:positive regulation of cell population proliferation"/>
    <property type="evidence" value="ECO:0000318"/>
    <property type="project" value="GO_Central"/>
</dbReference>
<dbReference type="GO" id="GO:0010838">
    <property type="term" value="P:positive regulation of keratinocyte proliferation"/>
    <property type="evidence" value="ECO:0000250"/>
    <property type="project" value="UniProtKB"/>
</dbReference>
<dbReference type="GO" id="GO:0090303">
    <property type="term" value="P:positive regulation of wound healing"/>
    <property type="evidence" value="ECO:0000250"/>
    <property type="project" value="UniProtKB"/>
</dbReference>
<dbReference type="GO" id="GO:0043434">
    <property type="term" value="P:response to peptide hormone"/>
    <property type="evidence" value="ECO:0000318"/>
    <property type="project" value="GO_Central"/>
</dbReference>
<dbReference type="FunFam" id="3.10.100.10:FF:000015">
    <property type="entry name" value="C-type lectin Cal"/>
    <property type="match status" value="1"/>
</dbReference>
<dbReference type="Gene3D" id="3.10.100.10">
    <property type="entry name" value="Mannose-Binding Protein A, subunit A"/>
    <property type="match status" value="1"/>
</dbReference>
<dbReference type="InterPro" id="IPR001304">
    <property type="entry name" value="C-type_lectin-like"/>
</dbReference>
<dbReference type="InterPro" id="IPR016186">
    <property type="entry name" value="C-type_lectin-like/link_sf"/>
</dbReference>
<dbReference type="InterPro" id="IPR050111">
    <property type="entry name" value="C-type_lectin/snaclec_domain"/>
</dbReference>
<dbReference type="InterPro" id="IPR018378">
    <property type="entry name" value="C-type_lectin_CS"/>
</dbReference>
<dbReference type="InterPro" id="IPR016187">
    <property type="entry name" value="CTDL_fold"/>
</dbReference>
<dbReference type="PANTHER" id="PTHR22803">
    <property type="entry name" value="MANNOSE, PHOSPHOLIPASE, LECTIN RECEPTOR RELATED"/>
    <property type="match status" value="1"/>
</dbReference>
<dbReference type="Pfam" id="PF00059">
    <property type="entry name" value="Lectin_C"/>
    <property type="match status" value="1"/>
</dbReference>
<dbReference type="PRINTS" id="PR01504">
    <property type="entry name" value="PNCREATITSAP"/>
</dbReference>
<dbReference type="SMART" id="SM00034">
    <property type="entry name" value="CLECT"/>
    <property type="match status" value="1"/>
</dbReference>
<dbReference type="SUPFAM" id="SSF56436">
    <property type="entry name" value="C-type lectin-like"/>
    <property type="match status" value="1"/>
</dbReference>
<dbReference type="PROSITE" id="PS00615">
    <property type="entry name" value="C_TYPE_LECTIN_1"/>
    <property type="match status" value="1"/>
</dbReference>
<dbReference type="PROSITE" id="PS50041">
    <property type="entry name" value="C_TYPE_LECTIN_2"/>
    <property type="match status" value="1"/>
</dbReference>
<comment type="function">
    <text evidence="2">Bactericidal C-type lectin. The lack of the EPN motif may explain its inability to bind peptidoglycan.</text>
</comment>
<comment type="function">
    <text evidence="3">Acts as a hormone in response to different stimuli like anti-inflammatory signals, such as IL17A, or gut microbiome. Secreted by different cell types to activate its receptor EXTL3 and induce cell specific signaling pathways. Induced by IL17A in keratinocytes, regulates keratinocyte proliferation and differentiation after skin injury via activation of EXTL3-PI3K-AKT signaling pathway. In parallel, inhibits skin inflammation through the inhibition of inflammatory cytokines such as IL6 and TNF. In pancreas, is able to permealize beta-cells membrane and stimulate their proliferation.</text>
</comment>
<comment type="subunit">
    <molecule>Regenerating islet-derived protein 3-alpha 15 kDa form</molecule>
    <text evidence="3">Forms a hexameric membrane-permeabilizing oligomeric pore on membrane phospholipids. The hexamer is formed by three dimers related by helical symmetry. Forms filaments, filamentation traps pore complexes and limits damage to host cells. Interacts with EXTL3.</text>
</comment>
<comment type="subcellular location">
    <subcellularLocation>
        <location evidence="3">Secreted</location>
    </subcellularLocation>
    <text evidence="3">Found in the apical region of pancreatic acinar cells.</text>
</comment>
<comment type="tissue specificity">
    <text>Low expression found in healthy pancreas.</text>
</comment>
<comment type="induction">
    <text>Appears in pancreatic juice after induction of pancreatic inflammation.</text>
</comment>
<comment type="domain">
    <text evidence="2">Lacks the EPN motif and the presence of Gln instead of Glu at amino-acid position 114 may explain its inability to bind peptidoglycan.</text>
</comment>
<comment type="PTM">
    <text evidence="3">Proteolytic processing by trypsin removes an inhibitory N-terminal propeptide and is essential for peptidoglycan binding and antibacterial activity.</text>
</comment>
<comment type="disease">
    <text>Overexpressed during the acute phase of pancreatitis.</text>
</comment>
<gene>
    <name type="primary">Reg3a</name>
    <name type="synonym">Pap2</name>
    <name type="synonym">Reg3</name>
</gene>
<sequence length="174" mass="19599">MLPRLSFNNVSWTLLYYLFIFQVRGEDSQKAVPSTRTSCPMGSKAYRSYCYTLVTTLKSWFQADLACQKRPSGHLVSILSGGEASFVSSLVTGRVNNNQDIWIWLHDPTMGQQPNGGGWEWSNSDVLNYLNWDGDPSSTVNRGNCGSLTATSEFLKWGDHHCDVELPFVCKFKQ</sequence>